<comment type="function">
    <text evidence="1">Hydrolyzes ribosome-free peptidyl-tRNAs (with 1 or more amino acids incorporated), which drop off the ribosome during protein synthesis, or as a result of ribosome stalling.</text>
</comment>
<comment type="function">
    <text evidence="1">Catalyzes the release of premature peptidyl moieties from peptidyl-tRNA molecules trapped in stalled 50S ribosomal subunits, and thus maintains levels of free tRNAs and 50S ribosomes.</text>
</comment>
<comment type="catalytic activity">
    <reaction evidence="1">
        <text>an N-acyl-L-alpha-aminoacyl-tRNA + H2O = an N-acyl-L-amino acid + a tRNA + H(+)</text>
        <dbReference type="Rhea" id="RHEA:54448"/>
        <dbReference type="Rhea" id="RHEA-COMP:10123"/>
        <dbReference type="Rhea" id="RHEA-COMP:13883"/>
        <dbReference type="ChEBI" id="CHEBI:15377"/>
        <dbReference type="ChEBI" id="CHEBI:15378"/>
        <dbReference type="ChEBI" id="CHEBI:59874"/>
        <dbReference type="ChEBI" id="CHEBI:78442"/>
        <dbReference type="ChEBI" id="CHEBI:138191"/>
        <dbReference type="EC" id="3.1.1.29"/>
    </reaction>
</comment>
<comment type="subunit">
    <text evidence="1">Monomer.</text>
</comment>
<comment type="subcellular location">
    <subcellularLocation>
        <location evidence="1">Cytoplasm</location>
    </subcellularLocation>
</comment>
<comment type="similarity">
    <text evidence="1">Belongs to the PTH family.</text>
</comment>
<keyword id="KW-0963">Cytoplasm</keyword>
<keyword id="KW-0378">Hydrolase</keyword>
<keyword id="KW-1185">Reference proteome</keyword>
<keyword id="KW-0694">RNA-binding</keyword>
<keyword id="KW-0820">tRNA-binding</keyword>
<dbReference type="EC" id="3.1.1.29" evidence="1"/>
<dbReference type="EMBL" id="CP000410">
    <property type="protein sequence ID" value="ABJ54027.1"/>
    <property type="molecule type" value="Genomic_DNA"/>
</dbReference>
<dbReference type="RefSeq" id="WP_000163929.1">
    <property type="nucleotide sequence ID" value="NZ_JAMLJR010000007.1"/>
</dbReference>
<dbReference type="SMR" id="Q04N59"/>
<dbReference type="PaxDb" id="373153-SPD_0005"/>
<dbReference type="KEGG" id="spd:SPD_0005"/>
<dbReference type="eggNOG" id="COG0193">
    <property type="taxonomic scope" value="Bacteria"/>
</dbReference>
<dbReference type="HOGENOM" id="CLU_062456_4_1_9"/>
<dbReference type="BioCyc" id="SPNE373153:G1G6V-5-MONOMER"/>
<dbReference type="Proteomes" id="UP000001452">
    <property type="component" value="Chromosome"/>
</dbReference>
<dbReference type="GO" id="GO:0005737">
    <property type="term" value="C:cytoplasm"/>
    <property type="evidence" value="ECO:0007669"/>
    <property type="project" value="UniProtKB-SubCell"/>
</dbReference>
<dbReference type="GO" id="GO:0004045">
    <property type="term" value="F:peptidyl-tRNA hydrolase activity"/>
    <property type="evidence" value="ECO:0007669"/>
    <property type="project" value="UniProtKB-UniRule"/>
</dbReference>
<dbReference type="GO" id="GO:0000049">
    <property type="term" value="F:tRNA binding"/>
    <property type="evidence" value="ECO:0007669"/>
    <property type="project" value="UniProtKB-UniRule"/>
</dbReference>
<dbReference type="GO" id="GO:0006515">
    <property type="term" value="P:protein quality control for misfolded or incompletely synthesized proteins"/>
    <property type="evidence" value="ECO:0007669"/>
    <property type="project" value="UniProtKB-UniRule"/>
</dbReference>
<dbReference type="GO" id="GO:0072344">
    <property type="term" value="P:rescue of stalled ribosome"/>
    <property type="evidence" value="ECO:0007669"/>
    <property type="project" value="UniProtKB-UniRule"/>
</dbReference>
<dbReference type="CDD" id="cd00462">
    <property type="entry name" value="PTH"/>
    <property type="match status" value="1"/>
</dbReference>
<dbReference type="FunFam" id="3.40.50.1470:FF:000001">
    <property type="entry name" value="Peptidyl-tRNA hydrolase"/>
    <property type="match status" value="1"/>
</dbReference>
<dbReference type="Gene3D" id="3.40.50.1470">
    <property type="entry name" value="Peptidyl-tRNA hydrolase"/>
    <property type="match status" value="1"/>
</dbReference>
<dbReference type="HAMAP" id="MF_00083">
    <property type="entry name" value="Pept_tRNA_hydro_bact"/>
    <property type="match status" value="1"/>
</dbReference>
<dbReference type="InterPro" id="IPR001328">
    <property type="entry name" value="Pept_tRNA_hydro"/>
</dbReference>
<dbReference type="InterPro" id="IPR018171">
    <property type="entry name" value="Pept_tRNA_hydro_CS"/>
</dbReference>
<dbReference type="InterPro" id="IPR036416">
    <property type="entry name" value="Pept_tRNA_hydro_sf"/>
</dbReference>
<dbReference type="NCBIfam" id="TIGR00447">
    <property type="entry name" value="pth"/>
    <property type="match status" value="1"/>
</dbReference>
<dbReference type="PANTHER" id="PTHR17224">
    <property type="entry name" value="PEPTIDYL-TRNA HYDROLASE"/>
    <property type="match status" value="1"/>
</dbReference>
<dbReference type="PANTHER" id="PTHR17224:SF1">
    <property type="entry name" value="PEPTIDYL-TRNA HYDROLASE"/>
    <property type="match status" value="1"/>
</dbReference>
<dbReference type="Pfam" id="PF01195">
    <property type="entry name" value="Pept_tRNA_hydro"/>
    <property type="match status" value="1"/>
</dbReference>
<dbReference type="SUPFAM" id="SSF53178">
    <property type="entry name" value="Peptidyl-tRNA hydrolase-like"/>
    <property type="match status" value="1"/>
</dbReference>
<dbReference type="PROSITE" id="PS01195">
    <property type="entry name" value="PEPT_TRNA_HYDROL_1"/>
    <property type="match status" value="1"/>
</dbReference>
<dbReference type="PROSITE" id="PS01196">
    <property type="entry name" value="PEPT_TRNA_HYDROL_2"/>
    <property type="match status" value="1"/>
</dbReference>
<evidence type="ECO:0000255" key="1">
    <source>
        <dbReference type="HAMAP-Rule" id="MF_00083"/>
    </source>
</evidence>
<reference key="1">
    <citation type="journal article" date="2007" name="J. Bacteriol.">
        <title>Genome sequence of Avery's virulent serotype 2 strain D39 of Streptococcus pneumoniae and comparison with that of unencapsulated laboratory strain R6.</title>
        <authorList>
            <person name="Lanie J.A."/>
            <person name="Ng W.-L."/>
            <person name="Kazmierczak K.M."/>
            <person name="Andrzejewski T.M."/>
            <person name="Davidsen T.M."/>
            <person name="Wayne K.J."/>
            <person name="Tettelin H."/>
            <person name="Glass J.I."/>
            <person name="Winkler M.E."/>
        </authorList>
    </citation>
    <scope>NUCLEOTIDE SEQUENCE [LARGE SCALE GENOMIC DNA]</scope>
    <source>
        <strain>D39 / NCTC 7466</strain>
    </source>
</reference>
<sequence length="189" mass="21419">MTKLLVGLGNPGDKYFETKHNVGFMLIDQLAKKQNVTFTHDKIFQADLASFFLNGEKIYLVKPTTFMNESGKAVHALLTYYGLDIDDLLIIYDDLDMEVGKIRLRAKGSAGGHNGIKSIIQHIGTQVFNRVKIGIGRPKNGMSVVHHVLSKFDRDDYIGILQSIDKVDDSVNYYLQEKKFEKTMQRYNG</sequence>
<proteinExistence type="inferred from homology"/>
<accession>Q04N59</accession>
<protein>
    <recommendedName>
        <fullName evidence="1">Peptidyl-tRNA hydrolase</fullName>
        <shortName evidence="1">Pth</shortName>
        <ecNumber evidence="1">3.1.1.29</ecNumber>
    </recommendedName>
</protein>
<feature type="chain" id="PRO_1000010655" description="Peptidyl-tRNA hydrolase">
    <location>
        <begin position="1"/>
        <end position="189"/>
    </location>
</feature>
<feature type="active site" description="Proton acceptor" evidence="1">
    <location>
        <position position="20"/>
    </location>
</feature>
<feature type="binding site" evidence="1">
    <location>
        <position position="15"/>
    </location>
    <ligand>
        <name>tRNA</name>
        <dbReference type="ChEBI" id="CHEBI:17843"/>
    </ligand>
</feature>
<feature type="binding site" evidence="1">
    <location>
        <position position="66"/>
    </location>
    <ligand>
        <name>tRNA</name>
        <dbReference type="ChEBI" id="CHEBI:17843"/>
    </ligand>
</feature>
<feature type="binding site" evidence="1">
    <location>
        <position position="68"/>
    </location>
    <ligand>
        <name>tRNA</name>
        <dbReference type="ChEBI" id="CHEBI:17843"/>
    </ligand>
</feature>
<feature type="binding site" evidence="1">
    <location>
        <position position="114"/>
    </location>
    <ligand>
        <name>tRNA</name>
        <dbReference type="ChEBI" id="CHEBI:17843"/>
    </ligand>
</feature>
<feature type="site" description="Discriminates between blocked and unblocked aminoacyl-tRNA" evidence="1">
    <location>
        <position position="10"/>
    </location>
</feature>
<feature type="site" description="Stabilizes the basic form of H active site to accept a proton" evidence="1">
    <location>
        <position position="93"/>
    </location>
</feature>
<name>PTH_STRP2</name>
<gene>
    <name evidence="1" type="primary">pth</name>
    <name type="ordered locus">SPD_0005</name>
</gene>
<organism>
    <name type="scientific">Streptococcus pneumoniae serotype 2 (strain D39 / NCTC 7466)</name>
    <dbReference type="NCBI Taxonomy" id="373153"/>
    <lineage>
        <taxon>Bacteria</taxon>
        <taxon>Bacillati</taxon>
        <taxon>Bacillota</taxon>
        <taxon>Bacilli</taxon>
        <taxon>Lactobacillales</taxon>
        <taxon>Streptococcaceae</taxon>
        <taxon>Streptococcus</taxon>
    </lineage>
</organism>